<keyword id="KW-0325">Glycoprotein</keyword>
<keyword id="KW-0328">Glycosyltransferase</keyword>
<keyword id="KW-0333">Golgi apparatus</keyword>
<keyword id="KW-0472">Membrane</keyword>
<keyword id="KW-1185">Reference proteome</keyword>
<keyword id="KW-0735">Signal-anchor</keyword>
<keyword id="KW-0808">Transferase</keyword>
<keyword id="KW-0812">Transmembrane</keyword>
<keyword id="KW-1133">Transmembrane helix</keyword>
<evidence type="ECO:0000250" key="1">
    <source>
        <dbReference type="UniProtKB" id="Q10MQ0"/>
    </source>
</evidence>
<evidence type="ECO:0000255" key="2"/>
<evidence type="ECO:0000255" key="3">
    <source>
        <dbReference type="PROSITE-ProRule" id="PRU00498"/>
    </source>
</evidence>
<evidence type="ECO:0000256" key="4">
    <source>
        <dbReference type="SAM" id="MobiDB-lite"/>
    </source>
</evidence>
<evidence type="ECO:0000269" key="5">
    <source>
    </source>
</evidence>
<evidence type="ECO:0000303" key="6">
    <source>
    </source>
</evidence>
<evidence type="ECO:0000305" key="7"/>
<evidence type="ECO:0000312" key="8">
    <source>
        <dbReference type="EMBL" id="BAD13026.1"/>
    </source>
</evidence>
<evidence type="ECO:0000312" key="9">
    <source>
        <dbReference type="EMBL" id="BAF09884.1"/>
    </source>
</evidence>
<proteinExistence type="evidence at transcript level"/>
<comment type="function">
    <text evidence="1">Probable glycosyltransferase that may be involved in the biosynthesis of xyloglucan.</text>
</comment>
<comment type="subcellular location">
    <subcellularLocation>
        <location evidence="7">Golgi apparatus membrane</location>
        <topology evidence="7">Single-pass type II membrane protein</topology>
    </subcellularLocation>
</comment>
<comment type="induction">
    <text evidence="5">Down-regulated by treatment with atrazine.</text>
</comment>
<comment type="similarity">
    <text evidence="7">Belongs to the glycosyltransferase 34 family.</text>
</comment>
<dbReference type="EC" id="2.4.-.-" evidence="7"/>
<dbReference type="EMBL" id="AP005113">
    <property type="protein sequence ID" value="BAD13026.1"/>
    <property type="molecule type" value="Genomic_DNA"/>
</dbReference>
<dbReference type="EMBL" id="AP008208">
    <property type="protein sequence ID" value="BAF09884.1"/>
    <property type="molecule type" value="Genomic_DNA"/>
</dbReference>
<dbReference type="EMBL" id="AP014958">
    <property type="protein sequence ID" value="BAS80671.1"/>
    <property type="molecule type" value="Genomic_DNA"/>
</dbReference>
<dbReference type="EMBL" id="AK108140">
    <property type="protein sequence ID" value="BAG98296.1"/>
    <property type="molecule type" value="mRNA"/>
</dbReference>
<dbReference type="RefSeq" id="XP_015627432.1">
    <property type="nucleotide sequence ID" value="XM_015771946.1"/>
</dbReference>
<dbReference type="SMR" id="Q6Z5M3"/>
<dbReference type="FunCoup" id="Q6Z5M3">
    <property type="interactions" value="210"/>
</dbReference>
<dbReference type="STRING" id="39947.Q6Z5M3"/>
<dbReference type="CAZy" id="GT34">
    <property type="family name" value="Glycosyltransferase Family 34"/>
</dbReference>
<dbReference type="GlyCosmos" id="Q6Z5M3">
    <property type="glycosylation" value="2 sites, No reported glycans"/>
</dbReference>
<dbReference type="PaxDb" id="39947-Q6Z5M3"/>
<dbReference type="EnsemblPlants" id="Os02t0723200-01">
    <property type="protein sequence ID" value="Os02t0723200-01"/>
    <property type="gene ID" value="Os02g0723200"/>
</dbReference>
<dbReference type="Gramene" id="Os02t0723200-01">
    <property type="protein sequence ID" value="Os02t0723200-01"/>
    <property type="gene ID" value="Os02g0723200"/>
</dbReference>
<dbReference type="KEGG" id="dosa:Os02g0723200"/>
<dbReference type="eggNOG" id="KOG4748">
    <property type="taxonomic scope" value="Eukaryota"/>
</dbReference>
<dbReference type="HOGENOM" id="CLU_034328_0_0_1"/>
<dbReference type="InParanoid" id="Q6Z5M3"/>
<dbReference type="OMA" id="YRAHNLV"/>
<dbReference type="OrthoDB" id="407658at2759"/>
<dbReference type="PlantReactome" id="R-OSA-5655101">
    <property type="pathway name" value="Xyloglucan biosynthesis"/>
</dbReference>
<dbReference type="Proteomes" id="UP000000763">
    <property type="component" value="Chromosome 2"/>
</dbReference>
<dbReference type="Proteomes" id="UP000059680">
    <property type="component" value="Chromosome 2"/>
</dbReference>
<dbReference type="GO" id="GO:0000139">
    <property type="term" value="C:Golgi membrane"/>
    <property type="evidence" value="ECO:0007669"/>
    <property type="project" value="UniProtKB-SubCell"/>
</dbReference>
<dbReference type="GO" id="GO:0008378">
    <property type="term" value="F:galactosyltransferase activity"/>
    <property type="evidence" value="ECO:0000318"/>
    <property type="project" value="GO_Central"/>
</dbReference>
<dbReference type="FunFam" id="3.90.550.10:FF:000127">
    <property type="entry name" value="Probable glycosyltransferase 7"/>
    <property type="match status" value="1"/>
</dbReference>
<dbReference type="Gene3D" id="3.90.550.10">
    <property type="entry name" value="Spore Coat Polysaccharide Biosynthesis Protein SpsA, Chain A"/>
    <property type="match status" value="1"/>
</dbReference>
<dbReference type="InterPro" id="IPR008630">
    <property type="entry name" value="Glyco_trans_34"/>
</dbReference>
<dbReference type="InterPro" id="IPR029044">
    <property type="entry name" value="Nucleotide-diphossugar_trans"/>
</dbReference>
<dbReference type="PANTHER" id="PTHR31311:SF3">
    <property type="entry name" value="GLYCOSYLTRANSFERASE 7-RELATED"/>
    <property type="match status" value="1"/>
</dbReference>
<dbReference type="PANTHER" id="PTHR31311">
    <property type="entry name" value="XYLOGLUCAN 6-XYLOSYLTRANSFERASE 5-RELATED-RELATED"/>
    <property type="match status" value="1"/>
</dbReference>
<dbReference type="Pfam" id="PF05637">
    <property type="entry name" value="Glyco_transf_34"/>
    <property type="match status" value="1"/>
</dbReference>
<feature type="chain" id="PRO_0000434335" description="Probable glycosyltransferase 7">
    <location>
        <begin position="1"/>
        <end position="447"/>
    </location>
</feature>
<feature type="topological domain" description="Cytoplasmic" evidence="7">
    <location>
        <begin position="1"/>
        <end position="37"/>
    </location>
</feature>
<feature type="transmembrane region" description="Helical; Signal-anchor for type II membrane protein" evidence="2">
    <location>
        <begin position="38"/>
        <end position="60"/>
    </location>
</feature>
<feature type="topological domain" description="Lumenal" evidence="7">
    <location>
        <begin position="61"/>
        <end position="447"/>
    </location>
</feature>
<feature type="region of interest" description="Disordered" evidence="4">
    <location>
        <begin position="1"/>
        <end position="31"/>
    </location>
</feature>
<feature type="compositionally biased region" description="Basic residues" evidence="4">
    <location>
        <begin position="8"/>
        <end position="23"/>
    </location>
</feature>
<feature type="glycosylation site" description="N-linked (GlcNAc...) asparagine" evidence="3">
    <location>
        <position position="285"/>
    </location>
</feature>
<feature type="glycosylation site" description="N-linked (GlcNAc...) asparagine" evidence="3">
    <location>
        <position position="329"/>
    </location>
</feature>
<organism>
    <name type="scientific">Oryza sativa subsp. japonica</name>
    <name type="common">Rice</name>
    <dbReference type="NCBI Taxonomy" id="39947"/>
    <lineage>
        <taxon>Eukaryota</taxon>
        <taxon>Viridiplantae</taxon>
        <taxon>Streptophyta</taxon>
        <taxon>Embryophyta</taxon>
        <taxon>Tracheophyta</taxon>
        <taxon>Spermatophyta</taxon>
        <taxon>Magnoliopsida</taxon>
        <taxon>Liliopsida</taxon>
        <taxon>Poales</taxon>
        <taxon>Poaceae</taxon>
        <taxon>BOP clade</taxon>
        <taxon>Oryzoideae</taxon>
        <taxon>Oryzeae</taxon>
        <taxon>Oryzinae</taxon>
        <taxon>Oryza</taxon>
        <taxon>Oryza sativa</taxon>
    </lineage>
</organism>
<gene>
    <name evidence="6" type="primary">GT7</name>
    <name evidence="9" type="ordered locus">Os02g0723200</name>
    <name evidence="7" type="ordered locus">LOC_Os02g49140</name>
    <name evidence="8" type="ORF">P0685G12.14</name>
</gene>
<reference key="1">
    <citation type="journal article" date="2005" name="Nature">
        <title>The map-based sequence of the rice genome.</title>
        <authorList>
            <consortium name="International rice genome sequencing project (IRGSP)"/>
        </authorList>
    </citation>
    <scope>NUCLEOTIDE SEQUENCE [LARGE SCALE GENOMIC DNA]</scope>
    <source>
        <strain>cv. Nipponbare</strain>
    </source>
</reference>
<reference key="2">
    <citation type="journal article" date="2008" name="Nucleic Acids Res.">
        <title>The rice annotation project database (RAP-DB): 2008 update.</title>
        <authorList>
            <consortium name="The rice annotation project (RAP)"/>
        </authorList>
    </citation>
    <scope>GENOME REANNOTATION</scope>
    <source>
        <strain>cv. Nipponbare</strain>
    </source>
</reference>
<reference key="3">
    <citation type="journal article" date="2013" name="Rice">
        <title>Improvement of the Oryza sativa Nipponbare reference genome using next generation sequence and optical map data.</title>
        <authorList>
            <person name="Kawahara Y."/>
            <person name="de la Bastide M."/>
            <person name="Hamilton J.P."/>
            <person name="Kanamori H."/>
            <person name="McCombie W.R."/>
            <person name="Ouyang S."/>
            <person name="Schwartz D.C."/>
            <person name="Tanaka T."/>
            <person name="Wu J."/>
            <person name="Zhou S."/>
            <person name="Childs K.L."/>
            <person name="Davidson R.M."/>
            <person name="Lin H."/>
            <person name="Quesada-Ocampo L."/>
            <person name="Vaillancourt B."/>
            <person name="Sakai H."/>
            <person name="Lee S.S."/>
            <person name="Kim J."/>
            <person name="Numa H."/>
            <person name="Itoh T."/>
            <person name="Buell C.R."/>
            <person name="Matsumoto T."/>
        </authorList>
    </citation>
    <scope>GENOME REANNOTATION</scope>
    <source>
        <strain>cv. Nipponbare</strain>
    </source>
</reference>
<reference key="4">
    <citation type="journal article" date="2003" name="Science">
        <title>Collection, mapping, and annotation of over 28,000 cDNA clones from japonica rice.</title>
        <authorList>
            <consortium name="The rice full-length cDNA consortium"/>
        </authorList>
    </citation>
    <scope>NUCLEOTIDE SEQUENCE [LARGE SCALE MRNA]</scope>
    <source>
        <strain>cv. Nipponbare</strain>
    </source>
</reference>
<reference key="5">
    <citation type="journal article" date="2013" name="Gene">
        <title>A collection of glycosyltransferases from rice (Oryza sativa) exposed to atrazine.</title>
        <authorList>
            <person name="Lu Y.C."/>
            <person name="Yang S.N."/>
            <person name="Zhang J.J."/>
            <person name="Zhang J.J."/>
            <person name="Tan L.R."/>
            <person name="Yang H."/>
        </authorList>
    </citation>
    <scope>INDUCTION</scope>
</reference>
<reference key="6">
    <citation type="journal article" date="2014" name="J. Exp. Bot.">
        <title>Mutation in xyloglucan 6-xylosytransferase results in abnormal root hair development in Oryza sativa.</title>
        <authorList>
            <person name="Wang C."/>
            <person name="Li S."/>
            <person name="Ng S."/>
            <person name="Zhang B."/>
            <person name="Zhou Y."/>
            <person name="Whelan J."/>
            <person name="Wu P."/>
            <person name="Shou H."/>
        </authorList>
    </citation>
    <scope>NOMENCLATURE</scope>
</reference>
<protein>
    <recommendedName>
        <fullName evidence="7">Probable glycosyltransferase 7</fullName>
        <shortName evidence="6">OsGT7</shortName>
        <ecNumber evidence="7">2.4.-.-</ecNumber>
    </recommendedName>
</protein>
<accession>Q6Z5M3</accession>
<accession>A0A0P0VNV5</accession>
<name>GT7_ORYSJ</name>
<sequence length="447" mass="49665">MRATTGARHLHPPWRRGLRHHRQSTMPPRASRGRLADAALFTAGAVLGSVLLLTLASPFSSSSSPSSGVGSGEVDRLGGGRTFYDDPGVAYTIDRPIVGWDEKRAEWLRAHPELAGGGGERVLMVSGSQPEPCGSPAGDSLLTRLLKNKLDYCRLNGVQLLYNTALLRPSMDRYWAKIPVVRAAMVAHPEAEWVWWVDSDAVLTDMDFRLPLSRYRDHNFVAHGWPHLVYESRSWTSLNAGVFLIRNCQWSLDFMDAWAAMGPDSPEYQHWGAVLTSTFKDKVFNESDDQSALVYMLLQSGSPWRDKVYLESDYYFEGYWLEIAGRLGNITERYEAMERGAAPLRRRHAEAEHASYAAARDAALAGAGLAESGVSGWRRPFVTHFTGCQPCSGHRNEHYTGKSCDEGIRRALSFADDQVLRAYGFRHAGPLSDAVSPLPFDHPTQTA</sequence>